<feature type="chain" id="PRO_0000407862" description="Ribonuclease VapC1">
    <location>
        <begin position="1"/>
        <end position="134"/>
    </location>
</feature>
<feature type="domain" description="PINc" evidence="1">
    <location>
        <begin position="3"/>
        <end position="132"/>
    </location>
</feature>
<feature type="binding site" evidence="1">
    <location>
        <position position="6"/>
    </location>
    <ligand>
        <name>Mg(2+)</name>
        <dbReference type="ChEBI" id="CHEBI:18420"/>
    </ligand>
</feature>
<feature type="binding site" evidence="1">
    <location>
        <position position="99"/>
    </location>
    <ligand>
        <name>Mg(2+)</name>
        <dbReference type="ChEBI" id="CHEBI:18420"/>
    </ligand>
</feature>
<feature type="mutagenesis site" description="Decreased protein stability." evidence="3">
    <original>D</original>
    <variation>A</variation>
    <location>
        <position position="6"/>
    </location>
</feature>
<feature type="mutagenesis site" description="Loss of toxicity." evidence="3">
    <original>T</original>
    <variation>P</variation>
    <location>
        <position position="7"/>
    </location>
</feature>
<feature type="mutagenesis site" description="Loss of toxicity." evidence="3">
    <original>S</original>
    <variation>G</variation>
    <variation>N</variation>
    <location>
        <position position="37"/>
    </location>
</feature>
<feature type="mutagenesis site" description="Loss of toxicity." evidence="3">
    <original>E</original>
    <variation>A</variation>
    <location>
        <position position="43"/>
    </location>
</feature>
<feature type="mutagenesis site" description="Partial loss of toxicity." evidence="3">
    <original>V</original>
    <variation>A</variation>
    <location>
        <position position="70"/>
    </location>
</feature>
<feature type="mutagenesis site" description="Partial loss of toxicity, still neutralized by VapB1." evidence="3">
    <original>W</original>
    <variation>R</variation>
    <location>
        <position position="84"/>
    </location>
</feature>
<feature type="mutagenesis site" description="Loss of toxicity." evidence="3">
    <original>A</original>
    <variation>P</variation>
    <location>
        <position position="85"/>
    </location>
</feature>
<feature type="mutagenesis site" description="Loss of toxicity." evidence="3">
    <original>G</original>
    <variation>V</variation>
    <location>
        <position position="92"/>
    </location>
</feature>
<feature type="mutagenesis site" description="Loss of toxicity." evidence="3">
    <original>D</original>
    <variation>G</variation>
    <location>
        <position position="99"/>
    </location>
</feature>
<feature type="mutagenesis site" description="Loss of toxicity." evidence="3">
    <original>W</original>
    <variation>C</variation>
    <location>
        <position position="101"/>
    </location>
</feature>
<feature type="mutagenesis site" description="Partial loss of toxicity, still neutralized by VapB1." evidence="3">
    <original>A</original>
    <variation>T</variation>
    <variation>V</variation>
    <location>
        <position position="103"/>
    </location>
</feature>
<feature type="mutagenesis site" description="Loss of toxicity." evidence="3">
    <original>C</original>
    <variation>R</variation>
    <location>
        <position position="104"/>
    </location>
</feature>
<feature type="mutagenesis site" description="Loss of toxicity." evidence="3">
    <original>T</original>
    <variation>A</variation>
    <variation>I</variation>
    <location>
        <position position="115"/>
    </location>
</feature>
<feature type="mutagenesis site" description="Nearly complete loss of toxicity, still neutralized by VapB1." evidence="3">
    <original>NVKE</original>
    <variation>DVKG</variation>
    <location>
        <begin position="117"/>
        <end position="120"/>
    </location>
</feature>
<feature type="mutagenesis site" description="Loss of toxicity." evidence="3">
    <original>N</original>
    <variation>I</variation>
    <location>
        <position position="117"/>
    </location>
</feature>
<feature type="mutagenesis site" description="Partial loss of toxicity, still neutralized by VapB1." evidence="3">
    <original>E</original>
    <variation>G</variation>
    <location>
        <position position="120"/>
    </location>
</feature>
<feature type="mutagenesis site" description="Loss of toxicity." evidence="3">
    <original>F</original>
    <variation>S</variation>
    <location>
        <position position="121"/>
    </location>
</feature>
<feature type="mutagenesis site" description="Loss of toxicity." evidence="3">
    <original>L</original>
    <variation>H</variation>
    <location>
        <position position="127"/>
    </location>
</feature>
<proteinExistence type="evidence at protein level"/>
<name>VAPC1_HAEI8</name>
<dbReference type="EC" id="3.1.-.-" evidence="1"/>
<dbReference type="EMBL" id="CP000057">
    <property type="protein sequence ID" value="AAX87380.1"/>
    <property type="molecule type" value="Genomic_DNA"/>
</dbReference>
<dbReference type="RefSeq" id="WP_005649049.1">
    <property type="nucleotide sequence ID" value="NC_007146.2"/>
</dbReference>
<dbReference type="SMR" id="Q4QNL7"/>
<dbReference type="GeneID" id="93219271"/>
<dbReference type="KEGG" id="hit:NTHI0440"/>
<dbReference type="HOGENOM" id="CLU_118482_5_0_6"/>
<dbReference type="PHI-base" id="PHI:9869"/>
<dbReference type="Proteomes" id="UP000002525">
    <property type="component" value="Chromosome"/>
</dbReference>
<dbReference type="GO" id="GO:0000287">
    <property type="term" value="F:magnesium ion binding"/>
    <property type="evidence" value="ECO:0007669"/>
    <property type="project" value="UniProtKB-UniRule"/>
</dbReference>
<dbReference type="GO" id="GO:0004540">
    <property type="term" value="F:RNA nuclease activity"/>
    <property type="evidence" value="ECO:0000314"/>
    <property type="project" value="CACAO"/>
</dbReference>
<dbReference type="CDD" id="cd18735">
    <property type="entry name" value="PIN_HiVapC1-like"/>
    <property type="match status" value="1"/>
</dbReference>
<dbReference type="FunFam" id="3.40.50.1010:FF:000107">
    <property type="entry name" value="Ribonuclease VapC1"/>
    <property type="match status" value="1"/>
</dbReference>
<dbReference type="Gene3D" id="3.40.50.1010">
    <property type="entry name" value="5'-nuclease"/>
    <property type="match status" value="1"/>
</dbReference>
<dbReference type="HAMAP" id="MF_00265">
    <property type="entry name" value="VapC_Nob1"/>
    <property type="match status" value="1"/>
</dbReference>
<dbReference type="InterPro" id="IPR029060">
    <property type="entry name" value="PIN-like_dom_sf"/>
</dbReference>
<dbReference type="InterPro" id="IPR002716">
    <property type="entry name" value="PIN_dom"/>
</dbReference>
<dbReference type="InterPro" id="IPR050556">
    <property type="entry name" value="Type_II_TA_system_RNase"/>
</dbReference>
<dbReference type="InterPro" id="IPR022907">
    <property type="entry name" value="VapC_family"/>
</dbReference>
<dbReference type="PANTHER" id="PTHR33653">
    <property type="entry name" value="RIBONUCLEASE VAPC2"/>
    <property type="match status" value="1"/>
</dbReference>
<dbReference type="PANTHER" id="PTHR33653:SF1">
    <property type="entry name" value="RIBONUCLEASE VAPC2"/>
    <property type="match status" value="1"/>
</dbReference>
<dbReference type="Pfam" id="PF01850">
    <property type="entry name" value="PIN"/>
    <property type="match status" value="1"/>
</dbReference>
<dbReference type="SUPFAM" id="SSF88723">
    <property type="entry name" value="PIN domain-like"/>
    <property type="match status" value="1"/>
</dbReference>
<reference key="1">
    <citation type="journal article" date="2005" name="J. Bacteriol.">
        <title>Genomic sequence of an otitis media isolate of nontypeable Haemophilus influenzae: comparative study with H. influenzae serotype d, strain KW20.</title>
        <authorList>
            <person name="Harrison A."/>
            <person name="Dyer D.W."/>
            <person name="Gillaspy A."/>
            <person name="Ray W.C."/>
            <person name="Mungur R."/>
            <person name="Carson M.B."/>
            <person name="Zhong H."/>
            <person name="Gipson J."/>
            <person name="Gipson M."/>
            <person name="Johnson L.S."/>
            <person name="Lewis L."/>
            <person name="Bakaletz L.O."/>
            <person name="Munson R.S. Jr."/>
        </authorList>
    </citation>
    <scope>NUCLEOTIDE SEQUENCE [LARGE SCALE GENOMIC DNA]</scope>
    <source>
        <strain>86-028NP</strain>
    </source>
</reference>
<reference key="2">
    <citation type="journal article" date="2007" name="J. Bacteriol.">
        <title>VapC-1 of nontypeable Haemophilus influenzae is a ribonuclease.</title>
        <authorList>
            <person name="Daines D.A."/>
            <person name="Wu M.H."/>
            <person name="Yuan S.Y."/>
        </authorList>
    </citation>
    <scope>INDUCTION</scope>
    <scope>OPERON STRUCTURE</scope>
    <source>
        <strain>86-028NP</strain>
    </source>
</reference>
<reference key="3">
    <citation type="journal article" date="2014" name="PLoS ONE">
        <title>Analysis of non-typeable Haemophilous influenzae VapC1 mutations reveals structural features required for toxicity and flexibility in the active site.</title>
        <authorList>
            <person name="Hamilton B."/>
            <person name="Manzella A."/>
            <person name="Schmidt K."/>
            <person name="DiMarco V."/>
            <person name="Butler J.S."/>
        </authorList>
    </citation>
    <scope>FUNCTION</scope>
    <scope>MUTAGENESIS OF ASP-6; THR-7; SER-37; GLU-43; VAL-70; TRP-84; ALA-85; GLY-92; ASP-99; TRP-101; ALA-103; CYS-104; THR-115; 117-ASN--GLU-120; ASN-117; GLU-120; PHE-121 AND LEU-127</scope>
</reference>
<reference key="4">
    <citation type="journal article" date="2016" name="J. Bacteriol.">
        <title>Structural determinants for antitoxin identity and insulation of cross talk between homologous toxin-antitoxin systems.</title>
        <authorList>
            <person name="Walling L.R."/>
            <person name="Butler J.S."/>
        </authorList>
    </citation>
    <scope>FUNCTION</scope>
    <scope>SUBUNIT</scope>
    <source>
        <strain>86-028NP</strain>
    </source>
</reference>
<gene>
    <name evidence="1" type="primary">vapC1</name>
    <name type="ordered locus">NTHI0440</name>
</gene>
<keyword id="KW-0378">Hydrolase</keyword>
<keyword id="KW-0460">Magnesium</keyword>
<keyword id="KW-0479">Metal-binding</keyword>
<keyword id="KW-0540">Nuclease</keyword>
<keyword id="KW-1277">Toxin-antitoxin system</keyword>
<comment type="function">
    <text evidence="3 4">Toxic component of a type II toxin-antitoxin (TA) system (PubMed:25391136, PubMed:27672196). Acts as an RNase (Probable). Its toxic effect is neutralized by cognate antitoxin VapB1 (PubMed:25391136, PubMed:27672196) but not by non-cognate antitoxin VapB2 (PubMed:25391136, PubMed:27672196).</text>
</comment>
<comment type="cofactor">
    <cofactor evidence="1">
        <name>Mg(2+)</name>
        <dbReference type="ChEBI" id="CHEBI:18420"/>
    </cofactor>
</comment>
<comment type="subunit">
    <text evidence="4">Forms a complex with VapB1 (PubMed:27672196).</text>
</comment>
<comment type="induction">
    <text evidence="2">More highly expressed in early growth phase, expression decreases as cell density decreases. Part of the vapB1-vapC1 operon.</text>
</comment>
<comment type="similarity">
    <text evidence="1">Belongs to the PINc/VapC protein family.</text>
</comment>
<evidence type="ECO:0000255" key="1">
    <source>
        <dbReference type="HAMAP-Rule" id="MF_00265"/>
    </source>
</evidence>
<evidence type="ECO:0000269" key="2">
    <source>
    </source>
</evidence>
<evidence type="ECO:0000269" key="3">
    <source>
    </source>
</evidence>
<evidence type="ECO:0000269" key="4">
    <source>
    </source>
</evidence>
<evidence type="ECO:0000303" key="5">
    <source>
    </source>
</evidence>
<protein>
    <recommendedName>
        <fullName evidence="1">Ribonuclease VapC1</fullName>
        <shortName evidence="1">RNase VapC</shortName>
        <ecNumber evidence="1">3.1.-.-</ecNumber>
    </recommendedName>
    <alternativeName>
        <fullName evidence="5">NTHi VapC1</fullName>
    </alternativeName>
    <alternativeName>
        <fullName evidence="1">Toxin VapC</fullName>
    </alternativeName>
</protein>
<sequence length="134" mass="15692">MIYMLDTNIIIYLMKNRPKIIAERVSQLLPNDRLVMSFITYAELIKGAFGSQNYEQSIRAIELLTERVNVLYPNEQICLHYGKWANTLKKQGRPIGNNDLWIACHALSLNAVLITHNVKEFQRITDLQWQDWTK</sequence>
<organism>
    <name type="scientific">Haemophilus influenzae (strain 86-028NP)</name>
    <dbReference type="NCBI Taxonomy" id="281310"/>
    <lineage>
        <taxon>Bacteria</taxon>
        <taxon>Pseudomonadati</taxon>
        <taxon>Pseudomonadota</taxon>
        <taxon>Gammaproteobacteria</taxon>
        <taxon>Pasteurellales</taxon>
        <taxon>Pasteurellaceae</taxon>
        <taxon>Haemophilus</taxon>
    </lineage>
</organism>
<accession>Q4QNL7</accession>